<keyword id="KW-0002">3D-structure</keyword>
<keyword id="KW-0020">Allergen</keyword>
<keyword id="KW-0106">Calcium</keyword>
<keyword id="KW-0479">Metal-binding</keyword>
<keyword id="KW-0677">Repeat</keyword>
<proteinExistence type="evidence at protein level"/>
<dbReference type="EMBL" id="AY082338">
    <property type="protein sequence ID" value="AAL92871.1"/>
    <property type="molecule type" value="mRNA"/>
</dbReference>
<dbReference type="PDB" id="2OPO">
    <property type="method" value="X-ray"/>
    <property type="resolution" value="1.75 A"/>
    <property type="chains" value="A/B/C/D=1-86"/>
</dbReference>
<dbReference type="PDBsum" id="2OPO"/>
<dbReference type="SMR" id="Q84V36"/>
<dbReference type="Allergome" id="1069">
    <property type="allergen name" value="Che a 3"/>
</dbReference>
<dbReference type="Allergome" id="3190">
    <property type="allergen name" value="Che a 3.0101"/>
</dbReference>
<dbReference type="EvolutionaryTrace" id="Q84V36"/>
<dbReference type="GO" id="GO:0005509">
    <property type="term" value="F:calcium ion binding"/>
    <property type="evidence" value="ECO:0007669"/>
    <property type="project" value="InterPro"/>
</dbReference>
<dbReference type="CDD" id="cd00051">
    <property type="entry name" value="EFh"/>
    <property type="match status" value="1"/>
</dbReference>
<dbReference type="FunFam" id="1.10.238.10:FF:000178">
    <property type="entry name" value="Calmodulin-2 A"/>
    <property type="match status" value="1"/>
</dbReference>
<dbReference type="Gene3D" id="1.10.238.10">
    <property type="entry name" value="EF-hand"/>
    <property type="match status" value="1"/>
</dbReference>
<dbReference type="InterPro" id="IPR011992">
    <property type="entry name" value="EF-hand-dom_pair"/>
</dbReference>
<dbReference type="InterPro" id="IPR018247">
    <property type="entry name" value="EF_Hand_1_Ca_BS"/>
</dbReference>
<dbReference type="InterPro" id="IPR002048">
    <property type="entry name" value="EF_hand_dom"/>
</dbReference>
<dbReference type="InterPro" id="IPR039647">
    <property type="entry name" value="EF_hand_pair_protein_CML-like"/>
</dbReference>
<dbReference type="PANTHER" id="PTHR10891">
    <property type="entry name" value="EF-HAND CALCIUM-BINDING DOMAIN CONTAINING PROTEIN"/>
    <property type="match status" value="1"/>
</dbReference>
<dbReference type="Pfam" id="PF13499">
    <property type="entry name" value="EF-hand_7"/>
    <property type="match status" value="1"/>
</dbReference>
<dbReference type="SMART" id="SM00054">
    <property type="entry name" value="EFh"/>
    <property type="match status" value="2"/>
</dbReference>
<dbReference type="SUPFAM" id="SSF47473">
    <property type="entry name" value="EF-hand"/>
    <property type="match status" value="1"/>
</dbReference>
<dbReference type="PROSITE" id="PS00018">
    <property type="entry name" value="EF_HAND_1"/>
    <property type="match status" value="2"/>
</dbReference>
<dbReference type="PROSITE" id="PS50222">
    <property type="entry name" value="EF_HAND_2"/>
    <property type="match status" value="2"/>
</dbReference>
<protein>
    <recommendedName>
        <fullName evidence="4">Polcalcin Che a 3</fullName>
    </recommendedName>
    <alternativeName>
        <fullName evidence="4">Calcium-binding pollen allergen Che a 3</fullName>
    </alternativeName>
    <allergenName evidence="4">Che a 3</allergenName>
</protein>
<sequence>MAAEDTPQDIADRERIFKRFDTNGDGKISSSELGDALKTLGSVTPDEVRRMMAEIDTDGDGFISFDEFTDFARANRGLVKDVSKIF</sequence>
<organism>
    <name type="scientific">Chenopodium album</name>
    <name type="common">Fat hen</name>
    <dbReference type="NCBI Taxonomy" id="3559"/>
    <lineage>
        <taxon>Eukaryota</taxon>
        <taxon>Viridiplantae</taxon>
        <taxon>Streptophyta</taxon>
        <taxon>Embryophyta</taxon>
        <taxon>Tracheophyta</taxon>
        <taxon>Spermatophyta</taxon>
        <taxon>Magnoliopsida</taxon>
        <taxon>eudicotyledons</taxon>
        <taxon>Gunneridae</taxon>
        <taxon>Pentapetalae</taxon>
        <taxon>Caryophyllales</taxon>
        <taxon>Chenopodiaceae</taxon>
        <taxon>Chenopodioideae</taxon>
        <taxon>Atripliceae</taxon>
        <taxon>Chenopodium</taxon>
    </lineage>
</organism>
<reference key="1">
    <citation type="journal article" date="2004" name="J. Allergy Clin. Immunol.">
        <title>Profilin (Che a 2) and polcalcin (Che a 3) are relevant allergens of Chenopodium album pollen: isolation, amino acid sequences, and immunologic properties.</title>
        <authorList>
            <person name="Barderas R."/>
            <person name="Villalba M."/>
            <person name="Pascual C.Y."/>
            <person name="Batanero E."/>
            <person name="Rodriguez R."/>
        </authorList>
    </citation>
    <scope>NUCLEOTIDE SEQUENCE [MRNA]</scope>
    <scope>ALLERGEN</scope>
    <source>
        <tissue>Pollen</tissue>
    </source>
</reference>
<reference key="2">
    <citation type="journal article" date="2008" name="J. Immunol.">
        <title>Three-dimensional structure of the cross-reactive pollen allergen Che a 3: visualizing cross-reactivity on the molecular surfaces of weed, grass, and tree pollen allergens.</title>
        <authorList>
            <person name="Verdino P."/>
            <person name="Barderas R."/>
            <person name="Villalba M."/>
            <person name="Westritschnig K."/>
            <person name="Valenta R."/>
            <person name="Rodriguez R."/>
            <person name="Keller W."/>
        </authorList>
    </citation>
    <scope>X-RAY CRYSTALLOGRAPHY (1.75 ANGSTROMS) IN COMPLEX WITH CALCIUM</scope>
    <scope>ALLERGEN</scope>
</reference>
<name>POLC3_CHEAL</name>
<feature type="chain" id="PRO_0000073671" description="Polcalcin Che a 3">
    <location>
        <begin position="1"/>
        <end position="86"/>
    </location>
</feature>
<feature type="domain" description="EF-hand 1" evidence="1">
    <location>
        <begin position="8"/>
        <end position="43"/>
    </location>
</feature>
<feature type="domain" description="EF-hand 2" evidence="1">
    <location>
        <begin position="43"/>
        <end position="78"/>
    </location>
</feature>
<feature type="binding site" evidence="1 3 5">
    <location>
        <position position="21"/>
    </location>
    <ligand>
        <name>Ca(2+)</name>
        <dbReference type="ChEBI" id="CHEBI:29108"/>
        <label>1</label>
    </ligand>
</feature>
<feature type="binding site" evidence="1 3 5">
    <location>
        <position position="23"/>
    </location>
    <ligand>
        <name>Ca(2+)</name>
        <dbReference type="ChEBI" id="CHEBI:29108"/>
        <label>1</label>
    </ligand>
</feature>
<feature type="binding site" evidence="1 3 5">
    <location>
        <position position="25"/>
    </location>
    <ligand>
        <name>Ca(2+)</name>
        <dbReference type="ChEBI" id="CHEBI:29108"/>
        <label>1</label>
    </ligand>
</feature>
<feature type="binding site" evidence="1 3 5">
    <location>
        <position position="27"/>
    </location>
    <ligand>
        <name>Ca(2+)</name>
        <dbReference type="ChEBI" id="CHEBI:29108"/>
        <label>1</label>
    </ligand>
</feature>
<feature type="binding site" evidence="1 3 5">
    <location>
        <position position="32"/>
    </location>
    <ligand>
        <name>Ca(2+)</name>
        <dbReference type="ChEBI" id="CHEBI:29108"/>
        <label>1</label>
    </ligand>
</feature>
<feature type="binding site" evidence="1 3 5">
    <location>
        <position position="56"/>
    </location>
    <ligand>
        <name>Ca(2+)</name>
        <dbReference type="ChEBI" id="CHEBI:29108"/>
        <label>2</label>
    </ligand>
</feature>
<feature type="binding site" evidence="1 3 5">
    <location>
        <position position="58"/>
    </location>
    <ligand>
        <name>Ca(2+)</name>
        <dbReference type="ChEBI" id="CHEBI:29108"/>
        <label>2</label>
    </ligand>
</feature>
<feature type="binding site" evidence="1 3 5">
    <location>
        <position position="60"/>
    </location>
    <ligand>
        <name>Ca(2+)</name>
        <dbReference type="ChEBI" id="CHEBI:29108"/>
        <label>2</label>
    </ligand>
</feature>
<feature type="binding site" evidence="1 3 5">
    <location>
        <position position="67"/>
    </location>
    <ligand>
        <name>Ca(2+)</name>
        <dbReference type="ChEBI" id="CHEBI:29108"/>
        <label>2</label>
    </ligand>
</feature>
<feature type="helix" evidence="6">
    <location>
        <begin position="7"/>
        <end position="20"/>
    </location>
</feature>
<feature type="strand" evidence="6">
    <location>
        <begin position="25"/>
        <end position="29"/>
    </location>
</feature>
<feature type="helix" evidence="6">
    <location>
        <begin position="30"/>
        <end position="38"/>
    </location>
</feature>
<feature type="turn" evidence="6">
    <location>
        <begin position="39"/>
        <end position="42"/>
    </location>
</feature>
<feature type="helix" evidence="6">
    <location>
        <begin position="45"/>
        <end position="55"/>
    </location>
</feature>
<feature type="strand" evidence="6">
    <location>
        <begin position="60"/>
        <end position="63"/>
    </location>
</feature>
<feature type="helix" evidence="6">
    <location>
        <begin position="65"/>
        <end position="74"/>
    </location>
</feature>
<feature type="turn" evidence="6">
    <location>
        <begin position="76"/>
        <end position="78"/>
    </location>
</feature>
<feature type="helix" evidence="6">
    <location>
        <begin position="79"/>
        <end position="85"/>
    </location>
</feature>
<accession>Q84V36</accession>
<comment type="allergen">
    <text evidence="2 3">Causes an allergic reaction in human. Binds to IgE (PubMed:15208604). Exhibits a cross-reactivity with IgE from allergic patient to the Phleum pratense Phl p 7 allergen (PubMed:18250440).</text>
</comment>
<evidence type="ECO:0000255" key="1">
    <source>
        <dbReference type="PROSITE-ProRule" id="PRU00448"/>
    </source>
</evidence>
<evidence type="ECO:0000269" key="2">
    <source>
    </source>
</evidence>
<evidence type="ECO:0000269" key="3">
    <source>
    </source>
</evidence>
<evidence type="ECO:0000303" key="4">
    <source>
    </source>
</evidence>
<evidence type="ECO:0007744" key="5">
    <source>
        <dbReference type="PDB" id="2OPO"/>
    </source>
</evidence>
<evidence type="ECO:0007829" key="6">
    <source>
        <dbReference type="PDB" id="2OPO"/>
    </source>
</evidence>